<keyword id="KW-0975">Bacterial flagellum</keyword>
<keyword id="KW-1003">Cell membrane</keyword>
<keyword id="KW-0472">Membrane</keyword>
<keyword id="KW-1185">Reference proteome</keyword>
<keyword id="KW-0812">Transmembrane</keyword>
<keyword id="KW-1133">Transmembrane helix</keyword>
<gene>
    <name type="primary">fliR</name>
    <name type="ordered locus">BSU16370</name>
</gene>
<sequence>MNSIIDLFPAFLLVFIRISAFFVTIPLFGHRNVPAVHRIGFAFFLAVICFSTIDKPPSLEIDEHYMLLAFKEALVGLCLGLIAYMMIAAVQIAGSFIDFQMGFSIANVIDPQTGAQSPLIGQFIYTMALLFMLSVNAHHLLLDGIYYSFQYISVDQAFPNFGDEKFAYFIAKSFNAMFIIAFQMSAPVVASLFLVDLALGIVARTVPQLNVFVVGLPLKIAVSFIMLIVCMSVIFVVVRNVFSLTIETMRNLLALVGVS</sequence>
<evidence type="ECO:0000250" key="1"/>
<evidence type="ECO:0000255" key="2"/>
<evidence type="ECO:0000305" key="3"/>
<reference key="1">
    <citation type="journal article" date="1993" name="Gene">
        <title>Bacillus subtilis flagellar proteins FliP, FliQ, FliR and FlhB are related to Shigella flexneri virulence factors.</title>
        <authorList>
            <person name="Carpenter P.B."/>
            <person name="Zuberi A.R."/>
            <person name="Ordal G.W."/>
        </authorList>
    </citation>
    <scope>NUCLEOTIDE SEQUENCE [GENOMIC DNA]</scope>
    <source>
        <strain>168 / OI1085</strain>
    </source>
</reference>
<reference key="2">
    <citation type="journal article" date="1997" name="Nature">
        <title>The complete genome sequence of the Gram-positive bacterium Bacillus subtilis.</title>
        <authorList>
            <person name="Kunst F."/>
            <person name="Ogasawara N."/>
            <person name="Moszer I."/>
            <person name="Albertini A.M."/>
            <person name="Alloni G."/>
            <person name="Azevedo V."/>
            <person name="Bertero M.G."/>
            <person name="Bessieres P."/>
            <person name="Bolotin A."/>
            <person name="Borchert S."/>
            <person name="Borriss R."/>
            <person name="Boursier L."/>
            <person name="Brans A."/>
            <person name="Braun M."/>
            <person name="Brignell S.C."/>
            <person name="Bron S."/>
            <person name="Brouillet S."/>
            <person name="Bruschi C.V."/>
            <person name="Caldwell B."/>
            <person name="Capuano V."/>
            <person name="Carter N.M."/>
            <person name="Choi S.-K."/>
            <person name="Codani J.-J."/>
            <person name="Connerton I.F."/>
            <person name="Cummings N.J."/>
            <person name="Daniel R.A."/>
            <person name="Denizot F."/>
            <person name="Devine K.M."/>
            <person name="Duesterhoeft A."/>
            <person name="Ehrlich S.D."/>
            <person name="Emmerson P.T."/>
            <person name="Entian K.-D."/>
            <person name="Errington J."/>
            <person name="Fabret C."/>
            <person name="Ferrari E."/>
            <person name="Foulger D."/>
            <person name="Fritz C."/>
            <person name="Fujita M."/>
            <person name="Fujita Y."/>
            <person name="Fuma S."/>
            <person name="Galizzi A."/>
            <person name="Galleron N."/>
            <person name="Ghim S.-Y."/>
            <person name="Glaser P."/>
            <person name="Goffeau A."/>
            <person name="Golightly E.J."/>
            <person name="Grandi G."/>
            <person name="Guiseppi G."/>
            <person name="Guy B.J."/>
            <person name="Haga K."/>
            <person name="Haiech J."/>
            <person name="Harwood C.R."/>
            <person name="Henaut A."/>
            <person name="Hilbert H."/>
            <person name="Holsappel S."/>
            <person name="Hosono S."/>
            <person name="Hullo M.-F."/>
            <person name="Itaya M."/>
            <person name="Jones L.-M."/>
            <person name="Joris B."/>
            <person name="Karamata D."/>
            <person name="Kasahara Y."/>
            <person name="Klaerr-Blanchard M."/>
            <person name="Klein C."/>
            <person name="Kobayashi Y."/>
            <person name="Koetter P."/>
            <person name="Koningstein G."/>
            <person name="Krogh S."/>
            <person name="Kumano M."/>
            <person name="Kurita K."/>
            <person name="Lapidus A."/>
            <person name="Lardinois S."/>
            <person name="Lauber J."/>
            <person name="Lazarevic V."/>
            <person name="Lee S.-M."/>
            <person name="Levine A."/>
            <person name="Liu H."/>
            <person name="Masuda S."/>
            <person name="Mauel C."/>
            <person name="Medigue C."/>
            <person name="Medina N."/>
            <person name="Mellado R.P."/>
            <person name="Mizuno M."/>
            <person name="Moestl D."/>
            <person name="Nakai S."/>
            <person name="Noback M."/>
            <person name="Noone D."/>
            <person name="O'Reilly M."/>
            <person name="Ogawa K."/>
            <person name="Ogiwara A."/>
            <person name="Oudega B."/>
            <person name="Park S.-H."/>
            <person name="Parro V."/>
            <person name="Pohl T.M."/>
            <person name="Portetelle D."/>
            <person name="Porwollik S."/>
            <person name="Prescott A.M."/>
            <person name="Presecan E."/>
            <person name="Pujic P."/>
            <person name="Purnelle B."/>
            <person name="Rapoport G."/>
            <person name="Rey M."/>
            <person name="Reynolds S."/>
            <person name="Rieger M."/>
            <person name="Rivolta C."/>
            <person name="Rocha E."/>
            <person name="Roche B."/>
            <person name="Rose M."/>
            <person name="Sadaie Y."/>
            <person name="Sato T."/>
            <person name="Scanlan E."/>
            <person name="Schleich S."/>
            <person name="Schroeter R."/>
            <person name="Scoffone F."/>
            <person name="Sekiguchi J."/>
            <person name="Sekowska A."/>
            <person name="Seror S.J."/>
            <person name="Serror P."/>
            <person name="Shin B.-S."/>
            <person name="Soldo B."/>
            <person name="Sorokin A."/>
            <person name="Tacconi E."/>
            <person name="Takagi T."/>
            <person name="Takahashi H."/>
            <person name="Takemaru K."/>
            <person name="Takeuchi M."/>
            <person name="Tamakoshi A."/>
            <person name="Tanaka T."/>
            <person name="Terpstra P."/>
            <person name="Tognoni A."/>
            <person name="Tosato V."/>
            <person name="Uchiyama S."/>
            <person name="Vandenbol M."/>
            <person name="Vannier F."/>
            <person name="Vassarotti A."/>
            <person name="Viari A."/>
            <person name="Wambutt R."/>
            <person name="Wedler E."/>
            <person name="Wedler H."/>
            <person name="Weitzenegger T."/>
            <person name="Winters P."/>
            <person name="Wipat A."/>
            <person name="Yamamoto H."/>
            <person name="Yamane K."/>
            <person name="Yasumoto K."/>
            <person name="Yata K."/>
            <person name="Yoshida K."/>
            <person name="Yoshikawa H.-F."/>
            <person name="Zumstein E."/>
            <person name="Yoshikawa H."/>
            <person name="Danchin A."/>
        </authorList>
    </citation>
    <scope>NUCLEOTIDE SEQUENCE [LARGE SCALE GENOMIC DNA]</scope>
    <source>
        <strain>168</strain>
    </source>
</reference>
<reference key="3">
    <citation type="journal article" date="2009" name="Microbiology">
        <title>From a consortium sequence to a unified sequence: the Bacillus subtilis 168 reference genome a decade later.</title>
        <authorList>
            <person name="Barbe V."/>
            <person name="Cruveiller S."/>
            <person name="Kunst F."/>
            <person name="Lenoble P."/>
            <person name="Meurice G."/>
            <person name="Sekowska A."/>
            <person name="Vallenet D."/>
            <person name="Wang T."/>
            <person name="Moszer I."/>
            <person name="Medigue C."/>
            <person name="Danchin A."/>
        </authorList>
    </citation>
    <scope>SEQUENCE REVISION TO 165 AND 174</scope>
</reference>
<accession>P35537</accession>
<protein>
    <recommendedName>
        <fullName>Flagellar biosynthetic protein FliR</fullName>
    </recommendedName>
</protein>
<organism>
    <name type="scientific">Bacillus subtilis (strain 168)</name>
    <dbReference type="NCBI Taxonomy" id="224308"/>
    <lineage>
        <taxon>Bacteria</taxon>
        <taxon>Bacillati</taxon>
        <taxon>Bacillota</taxon>
        <taxon>Bacilli</taxon>
        <taxon>Bacillales</taxon>
        <taxon>Bacillaceae</taxon>
        <taxon>Bacillus</taxon>
    </lineage>
</organism>
<dbReference type="EMBL" id="X74122">
    <property type="protein sequence ID" value="CAA52219.1"/>
    <property type="molecule type" value="Genomic_DNA"/>
</dbReference>
<dbReference type="EMBL" id="AL009126">
    <property type="protein sequence ID" value="CAB13510.2"/>
    <property type="molecule type" value="Genomic_DNA"/>
</dbReference>
<dbReference type="EMBL" id="M87005">
    <property type="status" value="NOT_ANNOTATED_CDS"/>
    <property type="molecule type" value="Genomic_DNA"/>
</dbReference>
<dbReference type="PIR" id="I40401">
    <property type="entry name" value="I40401"/>
</dbReference>
<dbReference type="RefSeq" id="NP_389519.2">
    <property type="nucleotide sequence ID" value="NC_000964.3"/>
</dbReference>
<dbReference type="RefSeq" id="WP_003245510.1">
    <property type="nucleotide sequence ID" value="NZ_OZ025638.1"/>
</dbReference>
<dbReference type="SMR" id="P35537"/>
<dbReference type="FunCoup" id="P35537">
    <property type="interactions" value="147"/>
</dbReference>
<dbReference type="STRING" id="224308.BSU16370"/>
<dbReference type="PaxDb" id="224308-BSU16370"/>
<dbReference type="EnsemblBacteria" id="CAB13510">
    <property type="protein sequence ID" value="CAB13510"/>
    <property type="gene ID" value="BSU_16370"/>
</dbReference>
<dbReference type="GeneID" id="940130"/>
<dbReference type="KEGG" id="bsu:BSU16370"/>
<dbReference type="PATRIC" id="fig|224308.179.peg.1778"/>
<dbReference type="eggNOG" id="COG1684">
    <property type="taxonomic scope" value="Bacteria"/>
</dbReference>
<dbReference type="InParanoid" id="P35537"/>
<dbReference type="OrthoDB" id="9807748at2"/>
<dbReference type="PhylomeDB" id="P35537"/>
<dbReference type="BioCyc" id="BSUB:BSU16370-MONOMER"/>
<dbReference type="Proteomes" id="UP000001570">
    <property type="component" value="Chromosome"/>
</dbReference>
<dbReference type="GO" id="GO:0009425">
    <property type="term" value="C:bacterial-type flagellum basal body"/>
    <property type="evidence" value="ECO:0007669"/>
    <property type="project" value="UniProtKB-SubCell"/>
</dbReference>
<dbReference type="GO" id="GO:0005886">
    <property type="term" value="C:plasma membrane"/>
    <property type="evidence" value="ECO:0000318"/>
    <property type="project" value="GO_Central"/>
</dbReference>
<dbReference type="GO" id="GO:0044780">
    <property type="term" value="P:bacterial-type flagellum assembly"/>
    <property type="evidence" value="ECO:0000315"/>
    <property type="project" value="CACAO"/>
</dbReference>
<dbReference type="GO" id="GO:0071978">
    <property type="term" value="P:bacterial-type flagellum-dependent swarming motility"/>
    <property type="evidence" value="ECO:0000315"/>
    <property type="project" value="CACAO"/>
</dbReference>
<dbReference type="GO" id="GO:0006605">
    <property type="term" value="P:protein targeting"/>
    <property type="evidence" value="ECO:0007669"/>
    <property type="project" value="InterPro"/>
</dbReference>
<dbReference type="InterPro" id="IPR006303">
    <property type="entry name" value="FliR"/>
</dbReference>
<dbReference type="InterPro" id="IPR002010">
    <property type="entry name" value="T3SS_IM_R"/>
</dbReference>
<dbReference type="NCBIfam" id="TIGR01400">
    <property type="entry name" value="fliR"/>
    <property type="match status" value="1"/>
</dbReference>
<dbReference type="PANTHER" id="PTHR30065">
    <property type="entry name" value="FLAGELLAR BIOSYNTHETIC PROTEIN FLIR"/>
    <property type="match status" value="1"/>
</dbReference>
<dbReference type="PANTHER" id="PTHR30065:SF1">
    <property type="entry name" value="SURFACE PRESENTATION OF ANTIGENS PROTEIN SPAR"/>
    <property type="match status" value="1"/>
</dbReference>
<dbReference type="Pfam" id="PF01311">
    <property type="entry name" value="Bac_export_1"/>
    <property type="match status" value="1"/>
</dbReference>
<dbReference type="PRINTS" id="PR00953">
    <property type="entry name" value="TYPE3IMRPROT"/>
</dbReference>
<feature type="chain" id="PRO_0000192049" description="Flagellar biosynthetic protein FliR">
    <location>
        <begin position="1"/>
        <end position="259"/>
    </location>
</feature>
<feature type="transmembrane region" description="Helical" evidence="2">
    <location>
        <begin position="8"/>
        <end position="28"/>
    </location>
</feature>
<feature type="transmembrane region" description="Helical" evidence="2">
    <location>
        <begin position="33"/>
        <end position="53"/>
    </location>
</feature>
<feature type="transmembrane region" description="Helical" evidence="2">
    <location>
        <begin position="73"/>
        <end position="93"/>
    </location>
</feature>
<feature type="transmembrane region" description="Helical" evidence="2">
    <location>
        <begin position="117"/>
        <end position="137"/>
    </location>
</feature>
<feature type="transmembrane region" description="Helical" evidence="2">
    <location>
        <begin position="177"/>
        <end position="197"/>
    </location>
</feature>
<feature type="transmembrane region" description="Helical" evidence="2">
    <location>
        <begin position="218"/>
        <end position="238"/>
    </location>
</feature>
<feature type="sequence conflict" description="In Ref. 1; CAA52219." evidence="3" ref="1">
    <original>K</original>
    <variation>Q</variation>
    <location>
        <position position="165"/>
    </location>
</feature>
<feature type="sequence conflict" description="In Ref. 1; CAA52219." evidence="3" ref="1">
    <original>F</original>
    <variation>L</variation>
    <location>
        <position position="174"/>
    </location>
</feature>
<proteinExistence type="inferred from homology"/>
<comment type="function">
    <text>Role in flagellar biosynthesis.</text>
</comment>
<comment type="subcellular location">
    <subcellularLocation>
        <location evidence="3">Cell membrane</location>
        <topology evidence="3">Multi-pass membrane protein</topology>
    </subcellularLocation>
    <subcellularLocation>
        <location evidence="1">Bacterial flagellum basal body</location>
    </subcellularLocation>
</comment>
<comment type="similarity">
    <text evidence="3">Belongs to the FliR/MopE/SpaR family.</text>
</comment>
<name>FLIR_BACSU</name>